<feature type="chain" id="PRO_1000164632" description="Alanine racemase">
    <location>
        <begin position="1"/>
        <end position="367"/>
    </location>
</feature>
<feature type="active site" description="Proton acceptor; specific for D-alanine" evidence="1">
    <location>
        <position position="40"/>
    </location>
</feature>
<feature type="active site" description="Proton acceptor; specific for L-alanine" evidence="1">
    <location>
        <position position="263"/>
    </location>
</feature>
<feature type="binding site" evidence="1">
    <location>
        <position position="136"/>
    </location>
    <ligand>
        <name>substrate</name>
    </ligand>
</feature>
<feature type="binding site" evidence="1">
    <location>
        <position position="310"/>
    </location>
    <ligand>
        <name>substrate</name>
    </ligand>
</feature>
<feature type="modified residue" description="N6-(pyridoxal phosphate)lysine" evidence="1">
    <location>
        <position position="40"/>
    </location>
</feature>
<organism>
    <name type="scientific">Streptococcus pneumoniae (strain P1031)</name>
    <dbReference type="NCBI Taxonomy" id="488223"/>
    <lineage>
        <taxon>Bacteria</taxon>
        <taxon>Bacillati</taxon>
        <taxon>Bacillota</taxon>
        <taxon>Bacilli</taxon>
        <taxon>Lactobacillales</taxon>
        <taxon>Streptococcaceae</taxon>
        <taxon>Streptococcus</taxon>
    </lineage>
</organism>
<comment type="function">
    <text evidence="1">Catalyzes the interconversion of L-alanine and D-alanine. May also act on other amino acids.</text>
</comment>
<comment type="catalytic activity">
    <reaction evidence="1">
        <text>L-alanine = D-alanine</text>
        <dbReference type="Rhea" id="RHEA:20249"/>
        <dbReference type="ChEBI" id="CHEBI:57416"/>
        <dbReference type="ChEBI" id="CHEBI:57972"/>
        <dbReference type="EC" id="5.1.1.1"/>
    </reaction>
</comment>
<comment type="cofactor">
    <cofactor evidence="1">
        <name>pyridoxal 5'-phosphate</name>
        <dbReference type="ChEBI" id="CHEBI:597326"/>
    </cofactor>
</comment>
<comment type="pathway">
    <text evidence="1">Amino-acid biosynthesis; D-alanine biosynthesis; D-alanine from L-alanine: step 1/1.</text>
</comment>
<comment type="similarity">
    <text evidence="1">Belongs to the alanine racemase family.</text>
</comment>
<gene>
    <name type="primary">alr</name>
    <name type="ordered locus">SPP_1714</name>
</gene>
<evidence type="ECO:0000255" key="1">
    <source>
        <dbReference type="HAMAP-Rule" id="MF_01201"/>
    </source>
</evidence>
<accession>C1CM34</accession>
<name>ALR_STRZP</name>
<dbReference type="EC" id="5.1.1.1" evidence="1"/>
<dbReference type="EMBL" id="CP000920">
    <property type="protein sequence ID" value="ACO21570.1"/>
    <property type="molecule type" value="Genomic_DNA"/>
</dbReference>
<dbReference type="RefSeq" id="WP_000648075.1">
    <property type="nucleotide sequence ID" value="NC_012467.1"/>
</dbReference>
<dbReference type="SMR" id="C1CM34"/>
<dbReference type="KEGG" id="spp:SPP_1714"/>
<dbReference type="HOGENOM" id="CLU_028393_2_1_9"/>
<dbReference type="UniPathway" id="UPA00042">
    <property type="reaction ID" value="UER00497"/>
</dbReference>
<dbReference type="GO" id="GO:0005829">
    <property type="term" value="C:cytosol"/>
    <property type="evidence" value="ECO:0007669"/>
    <property type="project" value="TreeGrafter"/>
</dbReference>
<dbReference type="GO" id="GO:0008784">
    <property type="term" value="F:alanine racemase activity"/>
    <property type="evidence" value="ECO:0007669"/>
    <property type="project" value="UniProtKB-UniRule"/>
</dbReference>
<dbReference type="GO" id="GO:0030170">
    <property type="term" value="F:pyridoxal phosphate binding"/>
    <property type="evidence" value="ECO:0007669"/>
    <property type="project" value="UniProtKB-UniRule"/>
</dbReference>
<dbReference type="GO" id="GO:0030632">
    <property type="term" value="P:D-alanine biosynthetic process"/>
    <property type="evidence" value="ECO:0007669"/>
    <property type="project" value="UniProtKB-UniRule"/>
</dbReference>
<dbReference type="GO" id="GO:0009252">
    <property type="term" value="P:peptidoglycan biosynthetic process"/>
    <property type="evidence" value="ECO:0007669"/>
    <property type="project" value="TreeGrafter"/>
</dbReference>
<dbReference type="CDD" id="cd00430">
    <property type="entry name" value="PLPDE_III_AR"/>
    <property type="match status" value="1"/>
</dbReference>
<dbReference type="FunFam" id="2.40.37.10:FF:000006">
    <property type="entry name" value="Alanine racemase"/>
    <property type="match status" value="1"/>
</dbReference>
<dbReference type="FunFam" id="3.20.20.10:FF:000002">
    <property type="entry name" value="Alanine racemase"/>
    <property type="match status" value="1"/>
</dbReference>
<dbReference type="Gene3D" id="3.20.20.10">
    <property type="entry name" value="Alanine racemase"/>
    <property type="match status" value="1"/>
</dbReference>
<dbReference type="Gene3D" id="2.40.37.10">
    <property type="entry name" value="Lyase, Ornithine Decarboxylase, Chain A, domain 1"/>
    <property type="match status" value="1"/>
</dbReference>
<dbReference type="HAMAP" id="MF_01201">
    <property type="entry name" value="Ala_racemase"/>
    <property type="match status" value="1"/>
</dbReference>
<dbReference type="InterPro" id="IPR000821">
    <property type="entry name" value="Ala_racemase"/>
</dbReference>
<dbReference type="InterPro" id="IPR009006">
    <property type="entry name" value="Ala_racemase/Decarboxylase_C"/>
</dbReference>
<dbReference type="InterPro" id="IPR011079">
    <property type="entry name" value="Ala_racemase_C"/>
</dbReference>
<dbReference type="InterPro" id="IPR001608">
    <property type="entry name" value="Ala_racemase_N"/>
</dbReference>
<dbReference type="InterPro" id="IPR020622">
    <property type="entry name" value="Ala_racemase_pyridoxalP-BS"/>
</dbReference>
<dbReference type="InterPro" id="IPR029066">
    <property type="entry name" value="PLP-binding_barrel"/>
</dbReference>
<dbReference type="NCBIfam" id="TIGR00492">
    <property type="entry name" value="alr"/>
    <property type="match status" value="1"/>
</dbReference>
<dbReference type="PANTHER" id="PTHR30511">
    <property type="entry name" value="ALANINE RACEMASE"/>
    <property type="match status" value="1"/>
</dbReference>
<dbReference type="PANTHER" id="PTHR30511:SF0">
    <property type="entry name" value="ALANINE RACEMASE, CATABOLIC-RELATED"/>
    <property type="match status" value="1"/>
</dbReference>
<dbReference type="Pfam" id="PF00842">
    <property type="entry name" value="Ala_racemase_C"/>
    <property type="match status" value="1"/>
</dbReference>
<dbReference type="Pfam" id="PF01168">
    <property type="entry name" value="Ala_racemase_N"/>
    <property type="match status" value="1"/>
</dbReference>
<dbReference type="PRINTS" id="PR00992">
    <property type="entry name" value="ALARACEMASE"/>
</dbReference>
<dbReference type="SMART" id="SM01005">
    <property type="entry name" value="Ala_racemase_C"/>
    <property type="match status" value="1"/>
</dbReference>
<dbReference type="SUPFAM" id="SSF50621">
    <property type="entry name" value="Alanine racemase C-terminal domain-like"/>
    <property type="match status" value="1"/>
</dbReference>
<dbReference type="SUPFAM" id="SSF51419">
    <property type="entry name" value="PLP-binding barrel"/>
    <property type="match status" value="1"/>
</dbReference>
<dbReference type="PROSITE" id="PS00395">
    <property type="entry name" value="ALANINE_RACEMASE"/>
    <property type="match status" value="1"/>
</dbReference>
<reference key="1">
    <citation type="journal article" date="2010" name="Genome Biol.">
        <title>Structure and dynamics of the pan-genome of Streptococcus pneumoniae and closely related species.</title>
        <authorList>
            <person name="Donati C."/>
            <person name="Hiller N.L."/>
            <person name="Tettelin H."/>
            <person name="Muzzi A."/>
            <person name="Croucher N.J."/>
            <person name="Angiuoli S.V."/>
            <person name="Oggioni M."/>
            <person name="Dunning Hotopp J.C."/>
            <person name="Hu F.Z."/>
            <person name="Riley D.R."/>
            <person name="Covacci A."/>
            <person name="Mitchell T.J."/>
            <person name="Bentley S.D."/>
            <person name="Kilian M."/>
            <person name="Ehrlich G.D."/>
            <person name="Rappuoli R."/>
            <person name="Moxon E.R."/>
            <person name="Masignani V."/>
        </authorList>
    </citation>
    <scope>NUCLEOTIDE SEQUENCE [LARGE SCALE GENOMIC DNA]</scope>
    <source>
        <strain>P1031</strain>
    </source>
</reference>
<proteinExistence type="inferred from homology"/>
<sequence length="367" mass="39858">MKASPHRPTKALIHLGAIRQNIQQMGAHIPQGTLKLAVVKANAYGHGAVAVAKAIQDDVDGFCVSNIDEAIELRQAGLSKPILILGVSEIEAVALAKEYDFTLTVAGLEWIQALLDKEVDLTGLTVHLKIDSGMGRIGFREASEVEQAQDLLQQHGVCVEGIFTHFATADEESDDYFNAQLERFKTILASMKEVPELVHASNSATTLWHVETIFNAVRMGDAMYGLNPSGAVLDLPYDLIPALTLESALVHVKTVPAGACMGYGATYQADSEQVIATVPIGYADGWTRDMQNFSVLVDGQACPIVGRVSMDQITIRLPKLYPLGTKVTLIGSNGDKEITATQVATYRVTINYEVVCLLSDRIPREYY</sequence>
<keyword id="KW-0413">Isomerase</keyword>
<keyword id="KW-0663">Pyridoxal phosphate</keyword>
<protein>
    <recommendedName>
        <fullName evidence="1">Alanine racemase</fullName>
        <ecNumber evidence="1">5.1.1.1</ecNumber>
    </recommendedName>
</protein>